<name>RPOB_POPTR</name>
<keyword id="KW-0150">Chloroplast</keyword>
<keyword id="KW-0240">DNA-directed RNA polymerase</keyword>
<keyword id="KW-0548">Nucleotidyltransferase</keyword>
<keyword id="KW-0934">Plastid</keyword>
<keyword id="KW-1185">Reference proteome</keyword>
<keyword id="KW-0804">Transcription</keyword>
<keyword id="KW-0808">Transferase</keyword>
<protein>
    <recommendedName>
        <fullName evidence="1">DNA-directed RNA polymerase subunit beta</fullName>
        <ecNumber evidence="1">2.7.7.6</ecNumber>
    </recommendedName>
    <alternativeName>
        <fullName evidence="1">PEP</fullName>
    </alternativeName>
    <alternativeName>
        <fullName evidence="1">Plastid-encoded RNA polymerase subunit beta</fullName>
        <shortName evidence="1">RNA polymerase subunit beta</shortName>
    </alternativeName>
</protein>
<dbReference type="EC" id="2.7.7.6" evidence="1"/>
<dbReference type="EMBL" id="EF489041">
    <property type="protein sequence ID" value="ABO36694.1"/>
    <property type="molecule type" value="Genomic_DNA"/>
</dbReference>
<dbReference type="RefSeq" id="YP_001109491.1">
    <property type="nucleotide sequence ID" value="NC_009143.1"/>
</dbReference>
<dbReference type="SMR" id="A4GYQ0"/>
<dbReference type="FunCoup" id="A4GYQ0">
    <property type="interactions" value="277"/>
</dbReference>
<dbReference type="STRING" id="3694.A4GYQ0"/>
<dbReference type="EnsemblPlants" id="Potri.013G142232.5.v4.1">
    <property type="protein sequence ID" value="Potri.013G142232.5.v4.1"/>
    <property type="gene ID" value="Potri.013G142232.v4.1"/>
</dbReference>
<dbReference type="GeneID" id="4929645"/>
<dbReference type="Gramene" id="Potri.013G142232.5.v4.1">
    <property type="protein sequence ID" value="Potri.013G142232.5.v4.1"/>
    <property type="gene ID" value="Potri.013G142232.v4.1"/>
</dbReference>
<dbReference type="KEGG" id="pop:4929645"/>
<dbReference type="InParanoid" id="A4GYQ0"/>
<dbReference type="OrthoDB" id="809843at2759"/>
<dbReference type="Proteomes" id="UP000006729">
    <property type="component" value="Chloroplast"/>
</dbReference>
<dbReference type="ExpressionAtlas" id="A4GYQ0">
    <property type="expression patterns" value="differential"/>
</dbReference>
<dbReference type="GO" id="GO:0009507">
    <property type="term" value="C:chloroplast"/>
    <property type="evidence" value="ECO:0007669"/>
    <property type="project" value="UniProtKB-SubCell"/>
</dbReference>
<dbReference type="GO" id="GO:0000428">
    <property type="term" value="C:DNA-directed RNA polymerase complex"/>
    <property type="evidence" value="ECO:0007669"/>
    <property type="project" value="UniProtKB-KW"/>
</dbReference>
<dbReference type="GO" id="GO:0005739">
    <property type="term" value="C:mitochondrion"/>
    <property type="evidence" value="ECO:0007669"/>
    <property type="project" value="GOC"/>
</dbReference>
<dbReference type="GO" id="GO:0003677">
    <property type="term" value="F:DNA binding"/>
    <property type="evidence" value="ECO:0007669"/>
    <property type="project" value="UniProtKB-UniRule"/>
</dbReference>
<dbReference type="GO" id="GO:0003899">
    <property type="term" value="F:DNA-directed RNA polymerase activity"/>
    <property type="evidence" value="ECO:0007669"/>
    <property type="project" value="UniProtKB-UniRule"/>
</dbReference>
<dbReference type="GO" id="GO:0032549">
    <property type="term" value="F:ribonucleoside binding"/>
    <property type="evidence" value="ECO:0007669"/>
    <property type="project" value="InterPro"/>
</dbReference>
<dbReference type="GO" id="GO:0006351">
    <property type="term" value="P:DNA-templated transcription"/>
    <property type="evidence" value="ECO:0007669"/>
    <property type="project" value="UniProtKB-UniRule"/>
</dbReference>
<dbReference type="CDD" id="cd00653">
    <property type="entry name" value="RNA_pol_B_RPB2"/>
    <property type="match status" value="1"/>
</dbReference>
<dbReference type="FunFam" id="3.90.1110.10:FF:000009">
    <property type="entry name" value="DNA-directed RNA polymerase subunit beta"/>
    <property type="match status" value="1"/>
</dbReference>
<dbReference type="Gene3D" id="2.40.50.100">
    <property type="match status" value="1"/>
</dbReference>
<dbReference type="Gene3D" id="2.40.50.150">
    <property type="match status" value="1"/>
</dbReference>
<dbReference type="Gene3D" id="3.90.1100.10">
    <property type="match status" value="1"/>
</dbReference>
<dbReference type="Gene3D" id="2.30.150.10">
    <property type="entry name" value="DNA-directed RNA polymerase, beta subunit, external 1 domain"/>
    <property type="match status" value="1"/>
</dbReference>
<dbReference type="Gene3D" id="2.40.270.10">
    <property type="entry name" value="DNA-directed RNA polymerase, subunit 2, domain 6"/>
    <property type="match status" value="1"/>
</dbReference>
<dbReference type="Gene3D" id="3.90.1800.10">
    <property type="entry name" value="RNA polymerase alpha subunit dimerisation domain"/>
    <property type="match status" value="1"/>
</dbReference>
<dbReference type="Gene3D" id="3.90.1110.10">
    <property type="entry name" value="RNA polymerase Rpb2, domain 2"/>
    <property type="match status" value="1"/>
</dbReference>
<dbReference type="HAMAP" id="MF_01321">
    <property type="entry name" value="RNApol_bact_RpoB"/>
    <property type="match status" value="1"/>
</dbReference>
<dbReference type="InterPro" id="IPR042107">
    <property type="entry name" value="DNA-dir_RNA_pol_bsu_ext_1_sf"/>
</dbReference>
<dbReference type="InterPro" id="IPR015712">
    <property type="entry name" value="DNA-dir_RNA_pol_su2"/>
</dbReference>
<dbReference type="InterPro" id="IPR007120">
    <property type="entry name" value="DNA-dir_RNAP_su2_dom"/>
</dbReference>
<dbReference type="InterPro" id="IPR037033">
    <property type="entry name" value="DNA-dir_RNAP_su2_hyb_sf"/>
</dbReference>
<dbReference type="InterPro" id="IPR010243">
    <property type="entry name" value="RNA_pol_bsu_bac"/>
</dbReference>
<dbReference type="InterPro" id="IPR007121">
    <property type="entry name" value="RNA_pol_bsu_CS"/>
</dbReference>
<dbReference type="InterPro" id="IPR007642">
    <property type="entry name" value="RNA_pol_Rpb2_2"/>
</dbReference>
<dbReference type="InterPro" id="IPR037034">
    <property type="entry name" value="RNA_pol_Rpb2_2_sf"/>
</dbReference>
<dbReference type="InterPro" id="IPR007645">
    <property type="entry name" value="RNA_pol_Rpb2_3"/>
</dbReference>
<dbReference type="InterPro" id="IPR007641">
    <property type="entry name" value="RNA_pol_Rpb2_7"/>
</dbReference>
<dbReference type="InterPro" id="IPR014724">
    <property type="entry name" value="RNA_pol_RPB2_OB-fold"/>
</dbReference>
<dbReference type="NCBIfam" id="NF001616">
    <property type="entry name" value="PRK00405.1"/>
    <property type="match status" value="1"/>
</dbReference>
<dbReference type="PANTHER" id="PTHR20856">
    <property type="entry name" value="DNA-DIRECTED RNA POLYMERASE I SUBUNIT 2"/>
    <property type="match status" value="1"/>
</dbReference>
<dbReference type="Pfam" id="PF04561">
    <property type="entry name" value="RNA_pol_Rpb2_2"/>
    <property type="match status" value="1"/>
</dbReference>
<dbReference type="Pfam" id="PF04565">
    <property type="entry name" value="RNA_pol_Rpb2_3"/>
    <property type="match status" value="1"/>
</dbReference>
<dbReference type="Pfam" id="PF00562">
    <property type="entry name" value="RNA_pol_Rpb2_6"/>
    <property type="match status" value="1"/>
</dbReference>
<dbReference type="Pfam" id="PF04560">
    <property type="entry name" value="RNA_pol_Rpb2_7"/>
    <property type="match status" value="1"/>
</dbReference>
<dbReference type="SUPFAM" id="SSF64484">
    <property type="entry name" value="beta and beta-prime subunits of DNA dependent RNA-polymerase"/>
    <property type="match status" value="1"/>
</dbReference>
<dbReference type="PROSITE" id="PS01166">
    <property type="entry name" value="RNA_POL_BETA"/>
    <property type="match status" value="1"/>
</dbReference>
<proteinExistence type="inferred from homology"/>
<reference key="1">
    <citation type="journal article" date="2006" name="Science">
        <title>The genome of black cottonwood, Populus trichocarpa (Torr. &amp; Gray).</title>
        <authorList>
            <person name="Tuskan G.A."/>
            <person name="Difazio S."/>
            <person name="Jansson S."/>
            <person name="Bohlmann J."/>
            <person name="Grigoriev I."/>
            <person name="Hellsten U."/>
            <person name="Putnam N."/>
            <person name="Ralph S."/>
            <person name="Rombauts S."/>
            <person name="Salamov A."/>
            <person name="Schein J."/>
            <person name="Sterck L."/>
            <person name="Aerts A."/>
            <person name="Bhalerao R.R."/>
            <person name="Bhalerao R.P."/>
            <person name="Blaudez D."/>
            <person name="Boerjan W."/>
            <person name="Brun A."/>
            <person name="Brunner A."/>
            <person name="Busov V."/>
            <person name="Campbell M."/>
            <person name="Carlson J."/>
            <person name="Chalot M."/>
            <person name="Chapman J."/>
            <person name="Chen G.-L."/>
            <person name="Cooper D."/>
            <person name="Coutinho P.M."/>
            <person name="Couturier J."/>
            <person name="Covert S."/>
            <person name="Cronk Q."/>
            <person name="Cunningham R."/>
            <person name="Davis J."/>
            <person name="Degroeve S."/>
            <person name="Dejardin A."/>
            <person name="dePamphilis C.W."/>
            <person name="Detter J."/>
            <person name="Dirks B."/>
            <person name="Dubchak I."/>
            <person name="Duplessis S."/>
            <person name="Ehlting J."/>
            <person name="Ellis B."/>
            <person name="Gendler K."/>
            <person name="Goodstein D."/>
            <person name="Gribskov M."/>
            <person name="Grimwood J."/>
            <person name="Groover A."/>
            <person name="Gunter L."/>
            <person name="Hamberger B."/>
            <person name="Heinze B."/>
            <person name="Helariutta Y."/>
            <person name="Henrissat B."/>
            <person name="Holligan D."/>
            <person name="Holt R."/>
            <person name="Huang W."/>
            <person name="Islam-Faridi N."/>
            <person name="Jones S."/>
            <person name="Jones-Rhoades M."/>
            <person name="Jorgensen R."/>
            <person name="Joshi C."/>
            <person name="Kangasjaervi J."/>
            <person name="Karlsson J."/>
            <person name="Kelleher C."/>
            <person name="Kirkpatrick R."/>
            <person name="Kirst M."/>
            <person name="Kohler A."/>
            <person name="Kalluri U."/>
            <person name="Larimer F."/>
            <person name="Leebens-Mack J."/>
            <person name="Leple J.-C."/>
            <person name="Locascio P."/>
            <person name="Lou Y."/>
            <person name="Lucas S."/>
            <person name="Martin F."/>
            <person name="Montanini B."/>
            <person name="Napoli C."/>
            <person name="Nelson D.R."/>
            <person name="Nelson C."/>
            <person name="Nieminen K."/>
            <person name="Nilsson O."/>
            <person name="Pereda V."/>
            <person name="Peter G."/>
            <person name="Philippe R."/>
            <person name="Pilate G."/>
            <person name="Poliakov A."/>
            <person name="Razumovskaya J."/>
            <person name="Richardson P."/>
            <person name="Rinaldi C."/>
            <person name="Ritland K."/>
            <person name="Rouze P."/>
            <person name="Ryaboy D."/>
            <person name="Schmutz J."/>
            <person name="Schrader J."/>
            <person name="Segerman B."/>
            <person name="Shin H."/>
            <person name="Siddiqui A."/>
            <person name="Sterky F."/>
            <person name="Terry A."/>
            <person name="Tsai C.-J."/>
            <person name="Uberbacher E."/>
            <person name="Unneberg P."/>
            <person name="Vahala J."/>
            <person name="Wall K."/>
            <person name="Wessler S."/>
            <person name="Yang G."/>
            <person name="Yin T."/>
            <person name="Douglas C."/>
            <person name="Marra M."/>
            <person name="Sandberg G."/>
            <person name="Van de Peer Y."/>
            <person name="Rokhsar D.S."/>
        </authorList>
    </citation>
    <scope>NUCLEOTIDE SEQUENCE [LARGE SCALE GENOMIC DNA]</scope>
    <source>
        <strain>cv. Nisqually</strain>
    </source>
</reference>
<gene>
    <name evidence="1" type="primary">rpoB</name>
    <name type="ordered locus">Poptr_cp012</name>
</gene>
<sequence>MLGDGNGGMSTIPGFNQIQFEGFCRFIDQGLAEELYKFPKIEDRDQEIEFQLFVETYQLVEPSIKERDAVYESLTYSSELYVSGGLIWKNSRDMQEQTIFIGNIPLMNSLGTSIVNGIYRIVINQILQSPGIYYRSELNHNGISVYTGTIISDWGGRVELEIDKKARIWARVSRKQKISILVLSSAMGLNLREILENVCYPEIFLSFLSDKEKKKIGSRENAILEFYQQFTCVGGGPVFSESLCKELQKKFFQQRCELGRIGRLNMNQRLNLDIPHNNTFLLPRDILAAADHLIGMKFGMGTLDDMNHLKNKRIRSVADLLQDQFGLALIRLENVVRGTICGAIRHKLIPTPQNLVTSTPLTTTYESFFGLHPLSQVLDRTNPLTQIVHGRKSSYLGPGGLTGRTASFRIRDIHPSHYGRICPIDTSEGINVGLIGSLTIHAKIGHLGSLESPFYEISARSKKVRMLYLSPNRDEYYMIAAGNCLALNRGAREEQVVPARYRQEFLTIAWEQVRLRSFFPFQYFSIGASLIPFIEHNDANRALMSSNMQRQAVPLARSEKCIVGTGLERQVALDSGVPAIAEHEGKIIYTDIDKIILSGNGYTVSIPLVMYQRSNKNTCMHQKTQVQRGKCIKRGQVLADGAATVGGELALGKNILVAYMPWEGYNFEDAVLISERLVYEDVYTSFHIRKYEIQTHVTSQGPERITNEIPHLEAHLLRNLDKNGIVMLGSWVETGDILIGKLTPQLAKESSYAPEDRLLRAILGIQVSTSKETCLKLPTGGRGRVIDVRWIQKKGGSSYNPETIRVYILQKREIKVGDKVAGRHGNKGIISKILPRQDMPYLQDGAPVDMVFNPLGVPSRMNVGQIFECSLGLAGSLLDRHYRVAPFDERYEQEASRKLVFSELYEAGKQTGNPWVFEPECPGKSRIFDGRTGDPFEQPVIIGKPYILKLIHQVADKIHGRSSGHYALVTQQPLRGRAKQGGQRVGEMEVWALEGFGVSHILQEMLTYKSDHIRARQEVLGTTISGRTIPKPEDAPESFRLLVRELRSLALELKHFLISEKNFQINRKEV</sequence>
<accession>A4GYQ0</accession>
<comment type="function">
    <text evidence="1">DNA-dependent RNA polymerase catalyzes the transcription of DNA into RNA using the four ribonucleoside triphosphates as substrates.</text>
</comment>
<comment type="catalytic activity">
    <reaction evidence="1">
        <text>RNA(n) + a ribonucleoside 5'-triphosphate = RNA(n+1) + diphosphate</text>
        <dbReference type="Rhea" id="RHEA:21248"/>
        <dbReference type="Rhea" id="RHEA-COMP:14527"/>
        <dbReference type="Rhea" id="RHEA-COMP:17342"/>
        <dbReference type="ChEBI" id="CHEBI:33019"/>
        <dbReference type="ChEBI" id="CHEBI:61557"/>
        <dbReference type="ChEBI" id="CHEBI:140395"/>
        <dbReference type="EC" id="2.7.7.6"/>
    </reaction>
</comment>
<comment type="subunit">
    <text evidence="1">In plastids the minimal PEP RNA polymerase catalytic core is composed of four subunits: alpha, beta, beta', and beta''. When a (nuclear-encoded) sigma factor is associated with the core the holoenzyme is formed, which can initiate transcription.</text>
</comment>
<comment type="subcellular location">
    <subcellularLocation>
        <location>Plastid</location>
        <location>Chloroplast</location>
    </subcellularLocation>
</comment>
<comment type="similarity">
    <text evidence="1">Belongs to the RNA polymerase beta chain family.</text>
</comment>
<evidence type="ECO:0000255" key="1">
    <source>
        <dbReference type="HAMAP-Rule" id="MF_01321"/>
    </source>
</evidence>
<feature type="chain" id="PRO_0000300453" description="DNA-directed RNA polymerase subunit beta">
    <location>
        <begin position="1"/>
        <end position="1070"/>
    </location>
</feature>
<geneLocation type="chloroplast"/>
<organism>
    <name type="scientific">Populus trichocarpa</name>
    <name type="common">Western balsam poplar</name>
    <name type="synonym">Populus balsamifera subsp. trichocarpa</name>
    <dbReference type="NCBI Taxonomy" id="3694"/>
    <lineage>
        <taxon>Eukaryota</taxon>
        <taxon>Viridiplantae</taxon>
        <taxon>Streptophyta</taxon>
        <taxon>Embryophyta</taxon>
        <taxon>Tracheophyta</taxon>
        <taxon>Spermatophyta</taxon>
        <taxon>Magnoliopsida</taxon>
        <taxon>eudicotyledons</taxon>
        <taxon>Gunneridae</taxon>
        <taxon>Pentapetalae</taxon>
        <taxon>rosids</taxon>
        <taxon>fabids</taxon>
        <taxon>Malpighiales</taxon>
        <taxon>Salicaceae</taxon>
        <taxon>Saliceae</taxon>
        <taxon>Populus</taxon>
    </lineage>
</organism>